<organism>
    <name type="scientific">Rhodopseudomonas palustris (strain BisB5)</name>
    <dbReference type="NCBI Taxonomy" id="316057"/>
    <lineage>
        <taxon>Bacteria</taxon>
        <taxon>Pseudomonadati</taxon>
        <taxon>Pseudomonadota</taxon>
        <taxon>Alphaproteobacteria</taxon>
        <taxon>Hyphomicrobiales</taxon>
        <taxon>Nitrobacteraceae</taxon>
        <taxon>Rhodopseudomonas</taxon>
    </lineage>
</organism>
<gene>
    <name evidence="1" type="primary">bpt</name>
    <name type="ordered locus">RPD_2658</name>
</gene>
<sequence length="257" mass="29264">MTQHSRDTPQFYLTAPSPCPYLPGRHERKVFTHLVGNKAGELNDLLTHGGFRRSQSIAYRPACDQCRSCVSVRVIANEFRASRNQRKILARNADIVGEQRNPVPTSEQYSVFRAYLDQRHRHGGMADMTVLDYAMMVEDSHVETRIIEYRKRTLDTGITGRGGDLVAAALTDVLNDGLSMVYSFYEPGEQNRSLGTFMILDHIARARRLGLPYVYLGYWIEGSKKMDYKGRYLPQQRLAPSGWIRVDASGEYPEPQD</sequence>
<feature type="chain" id="PRO_0000263212" description="Aspartate/glutamate leucyltransferase">
    <location>
        <begin position="1"/>
        <end position="257"/>
    </location>
</feature>
<comment type="function">
    <text evidence="1">Functions in the N-end rule pathway of protein degradation where it conjugates Leu from its aminoacyl-tRNA to the N-termini of proteins containing an N-terminal aspartate or glutamate.</text>
</comment>
<comment type="catalytic activity">
    <reaction evidence="1">
        <text>N-terminal L-glutamyl-[protein] + L-leucyl-tRNA(Leu) = N-terminal L-leucyl-L-glutamyl-[protein] + tRNA(Leu) + H(+)</text>
        <dbReference type="Rhea" id="RHEA:50412"/>
        <dbReference type="Rhea" id="RHEA-COMP:9613"/>
        <dbReference type="Rhea" id="RHEA-COMP:9622"/>
        <dbReference type="Rhea" id="RHEA-COMP:12664"/>
        <dbReference type="Rhea" id="RHEA-COMP:12668"/>
        <dbReference type="ChEBI" id="CHEBI:15378"/>
        <dbReference type="ChEBI" id="CHEBI:64721"/>
        <dbReference type="ChEBI" id="CHEBI:78442"/>
        <dbReference type="ChEBI" id="CHEBI:78494"/>
        <dbReference type="ChEBI" id="CHEBI:133041"/>
        <dbReference type="EC" id="2.3.2.29"/>
    </reaction>
</comment>
<comment type="catalytic activity">
    <reaction evidence="1">
        <text>N-terminal L-aspartyl-[protein] + L-leucyl-tRNA(Leu) = N-terminal L-leucyl-L-aspartyl-[protein] + tRNA(Leu) + H(+)</text>
        <dbReference type="Rhea" id="RHEA:50420"/>
        <dbReference type="Rhea" id="RHEA-COMP:9613"/>
        <dbReference type="Rhea" id="RHEA-COMP:9622"/>
        <dbReference type="Rhea" id="RHEA-COMP:12669"/>
        <dbReference type="Rhea" id="RHEA-COMP:12674"/>
        <dbReference type="ChEBI" id="CHEBI:15378"/>
        <dbReference type="ChEBI" id="CHEBI:64720"/>
        <dbReference type="ChEBI" id="CHEBI:78442"/>
        <dbReference type="ChEBI" id="CHEBI:78494"/>
        <dbReference type="ChEBI" id="CHEBI:133042"/>
        <dbReference type="EC" id="2.3.2.29"/>
    </reaction>
</comment>
<comment type="subcellular location">
    <subcellularLocation>
        <location evidence="1">Cytoplasm</location>
    </subcellularLocation>
</comment>
<comment type="similarity">
    <text evidence="1">Belongs to the R-transferase family. Bpt subfamily.</text>
</comment>
<reference key="1">
    <citation type="submission" date="2006-03" db="EMBL/GenBank/DDBJ databases">
        <title>Complete sequence of Rhodopseudomonas palustris BisB5.</title>
        <authorList>
            <consortium name="US DOE Joint Genome Institute"/>
            <person name="Copeland A."/>
            <person name="Lucas S."/>
            <person name="Lapidus A."/>
            <person name="Barry K."/>
            <person name="Detter J.C."/>
            <person name="Glavina del Rio T."/>
            <person name="Hammon N."/>
            <person name="Israni S."/>
            <person name="Dalin E."/>
            <person name="Tice H."/>
            <person name="Pitluck S."/>
            <person name="Chain P."/>
            <person name="Malfatti S."/>
            <person name="Shin M."/>
            <person name="Vergez L."/>
            <person name="Schmutz J."/>
            <person name="Larimer F."/>
            <person name="Land M."/>
            <person name="Hauser L."/>
            <person name="Pelletier D.A."/>
            <person name="Kyrpides N."/>
            <person name="Lykidis A."/>
            <person name="Oda Y."/>
            <person name="Harwood C.S."/>
            <person name="Richardson P."/>
        </authorList>
    </citation>
    <scope>NUCLEOTIDE SEQUENCE [LARGE SCALE GENOMIC DNA]</scope>
    <source>
        <strain>BisB5</strain>
    </source>
</reference>
<evidence type="ECO:0000255" key="1">
    <source>
        <dbReference type="HAMAP-Rule" id="MF_00689"/>
    </source>
</evidence>
<dbReference type="EC" id="2.3.2.29" evidence="1"/>
<dbReference type="EMBL" id="CP000283">
    <property type="protein sequence ID" value="ABE39887.1"/>
    <property type="molecule type" value="Genomic_DNA"/>
</dbReference>
<dbReference type="SMR" id="Q136V2"/>
<dbReference type="STRING" id="316057.RPD_2658"/>
<dbReference type="KEGG" id="rpd:RPD_2658"/>
<dbReference type="eggNOG" id="COG2935">
    <property type="taxonomic scope" value="Bacteria"/>
</dbReference>
<dbReference type="HOGENOM" id="CLU_077607_1_0_5"/>
<dbReference type="BioCyc" id="RPAL316057:RPD_RS13370-MONOMER"/>
<dbReference type="Proteomes" id="UP000001818">
    <property type="component" value="Chromosome"/>
</dbReference>
<dbReference type="GO" id="GO:0005737">
    <property type="term" value="C:cytoplasm"/>
    <property type="evidence" value="ECO:0007669"/>
    <property type="project" value="UniProtKB-SubCell"/>
</dbReference>
<dbReference type="GO" id="GO:0004057">
    <property type="term" value="F:arginyl-tRNA--protein transferase activity"/>
    <property type="evidence" value="ECO:0007669"/>
    <property type="project" value="InterPro"/>
</dbReference>
<dbReference type="GO" id="GO:0008914">
    <property type="term" value="F:leucyl-tRNA--protein transferase activity"/>
    <property type="evidence" value="ECO:0007669"/>
    <property type="project" value="UniProtKB-UniRule"/>
</dbReference>
<dbReference type="GO" id="GO:0071596">
    <property type="term" value="P:ubiquitin-dependent protein catabolic process via the N-end rule pathway"/>
    <property type="evidence" value="ECO:0007669"/>
    <property type="project" value="InterPro"/>
</dbReference>
<dbReference type="HAMAP" id="MF_00689">
    <property type="entry name" value="Bpt"/>
    <property type="match status" value="1"/>
</dbReference>
<dbReference type="InterPro" id="IPR016181">
    <property type="entry name" value="Acyl_CoA_acyltransferase"/>
</dbReference>
<dbReference type="InterPro" id="IPR017138">
    <property type="entry name" value="Asp_Glu_LeuTrfase"/>
</dbReference>
<dbReference type="InterPro" id="IPR030700">
    <property type="entry name" value="N-end_Aminoacyl_Trfase"/>
</dbReference>
<dbReference type="InterPro" id="IPR007472">
    <property type="entry name" value="N-end_Aminoacyl_Trfase_C"/>
</dbReference>
<dbReference type="InterPro" id="IPR007471">
    <property type="entry name" value="N-end_Aminoacyl_Trfase_N"/>
</dbReference>
<dbReference type="NCBIfam" id="NF002342">
    <property type="entry name" value="PRK01305.1-3"/>
    <property type="match status" value="1"/>
</dbReference>
<dbReference type="NCBIfam" id="NF002343">
    <property type="entry name" value="PRK01305.1-4"/>
    <property type="match status" value="1"/>
</dbReference>
<dbReference type="NCBIfam" id="NF002346">
    <property type="entry name" value="PRK01305.2-3"/>
    <property type="match status" value="1"/>
</dbReference>
<dbReference type="PANTHER" id="PTHR21367">
    <property type="entry name" value="ARGININE-TRNA-PROTEIN TRANSFERASE 1"/>
    <property type="match status" value="1"/>
</dbReference>
<dbReference type="PANTHER" id="PTHR21367:SF1">
    <property type="entry name" value="ARGINYL-TRNA--PROTEIN TRANSFERASE 1"/>
    <property type="match status" value="1"/>
</dbReference>
<dbReference type="Pfam" id="PF04377">
    <property type="entry name" value="ATE_C"/>
    <property type="match status" value="1"/>
</dbReference>
<dbReference type="Pfam" id="PF04376">
    <property type="entry name" value="ATE_N"/>
    <property type="match status" value="1"/>
</dbReference>
<dbReference type="PIRSF" id="PIRSF037208">
    <property type="entry name" value="ATE_pro_prd"/>
    <property type="match status" value="1"/>
</dbReference>
<dbReference type="SUPFAM" id="SSF55729">
    <property type="entry name" value="Acyl-CoA N-acyltransferases (Nat)"/>
    <property type="match status" value="1"/>
</dbReference>
<keyword id="KW-0012">Acyltransferase</keyword>
<keyword id="KW-0963">Cytoplasm</keyword>
<keyword id="KW-0808">Transferase</keyword>
<accession>Q136V2</accession>
<name>BPT_RHOPS</name>
<proteinExistence type="inferred from homology"/>
<protein>
    <recommendedName>
        <fullName evidence="1">Aspartate/glutamate leucyltransferase</fullName>
        <ecNumber evidence="1">2.3.2.29</ecNumber>
    </recommendedName>
</protein>